<accession>A8G399</accession>
<sequence length="147" mass="16266">MMNILLINGPNLNLLGTREPEIYGNKTLIDIEKDLTKVAKEKSINIECFQSNHEGEIVDKIHDSVKSIQGILINAGAFTHTSISIRDALIGSKIPFVELHISNIFSREDFRKESFLTDKAIGIISGFGISSYFLALEGIIGYLNGKN</sequence>
<protein>
    <recommendedName>
        <fullName evidence="1">3-dehydroquinate dehydratase</fullName>
        <shortName evidence="1">3-dehydroquinase</shortName>
        <ecNumber evidence="1">4.2.1.10</ecNumber>
    </recommendedName>
    <alternativeName>
        <fullName evidence="1">Type II DHQase</fullName>
    </alternativeName>
</protein>
<reference key="1">
    <citation type="journal article" date="2007" name="PLoS Genet.">
        <title>Patterns and implications of gene gain and loss in the evolution of Prochlorococcus.</title>
        <authorList>
            <person name="Kettler G.C."/>
            <person name="Martiny A.C."/>
            <person name="Huang K."/>
            <person name="Zucker J."/>
            <person name="Coleman M.L."/>
            <person name="Rodrigue S."/>
            <person name="Chen F."/>
            <person name="Lapidus A."/>
            <person name="Ferriera S."/>
            <person name="Johnson J."/>
            <person name="Steglich C."/>
            <person name="Church G.M."/>
            <person name="Richardson P."/>
            <person name="Chisholm S.W."/>
        </authorList>
    </citation>
    <scope>NUCLEOTIDE SEQUENCE [LARGE SCALE GENOMIC DNA]</scope>
    <source>
        <strain>MIT 9215</strain>
    </source>
</reference>
<organism>
    <name type="scientific">Prochlorococcus marinus (strain MIT 9215)</name>
    <dbReference type="NCBI Taxonomy" id="93060"/>
    <lineage>
        <taxon>Bacteria</taxon>
        <taxon>Bacillati</taxon>
        <taxon>Cyanobacteriota</taxon>
        <taxon>Cyanophyceae</taxon>
        <taxon>Synechococcales</taxon>
        <taxon>Prochlorococcaceae</taxon>
        <taxon>Prochlorococcus</taxon>
    </lineage>
</organism>
<gene>
    <name evidence="1" type="primary">aroQ</name>
    <name type="ordered locus">P9215_04641</name>
</gene>
<feature type="chain" id="PRO_1000077054" description="3-dehydroquinate dehydratase">
    <location>
        <begin position="1"/>
        <end position="147"/>
    </location>
</feature>
<feature type="active site" description="Proton acceptor" evidence="1">
    <location>
        <position position="23"/>
    </location>
</feature>
<feature type="active site" description="Proton donor" evidence="1">
    <location>
        <position position="100"/>
    </location>
</feature>
<feature type="binding site" evidence="1">
    <location>
        <position position="74"/>
    </location>
    <ligand>
        <name>substrate</name>
    </ligand>
</feature>
<feature type="binding site" evidence="1">
    <location>
        <position position="80"/>
    </location>
    <ligand>
        <name>substrate</name>
    </ligand>
</feature>
<feature type="binding site" evidence="1">
    <location>
        <position position="87"/>
    </location>
    <ligand>
        <name>substrate</name>
    </ligand>
</feature>
<feature type="binding site" evidence="1">
    <location>
        <begin position="101"/>
        <end position="102"/>
    </location>
    <ligand>
        <name>substrate</name>
    </ligand>
</feature>
<feature type="binding site" evidence="1">
    <location>
        <position position="111"/>
    </location>
    <ligand>
        <name>substrate</name>
    </ligand>
</feature>
<feature type="site" description="Transition state stabilizer" evidence="1">
    <location>
        <position position="18"/>
    </location>
</feature>
<evidence type="ECO:0000255" key="1">
    <source>
        <dbReference type="HAMAP-Rule" id="MF_00169"/>
    </source>
</evidence>
<name>AROQ_PROM2</name>
<comment type="function">
    <text evidence="1">Catalyzes a trans-dehydration via an enolate intermediate.</text>
</comment>
<comment type="catalytic activity">
    <reaction evidence="1">
        <text>3-dehydroquinate = 3-dehydroshikimate + H2O</text>
        <dbReference type="Rhea" id="RHEA:21096"/>
        <dbReference type="ChEBI" id="CHEBI:15377"/>
        <dbReference type="ChEBI" id="CHEBI:16630"/>
        <dbReference type="ChEBI" id="CHEBI:32364"/>
        <dbReference type="EC" id="4.2.1.10"/>
    </reaction>
</comment>
<comment type="pathway">
    <text evidence="1">Metabolic intermediate biosynthesis; chorismate biosynthesis; chorismate from D-erythrose 4-phosphate and phosphoenolpyruvate: step 3/7.</text>
</comment>
<comment type="subunit">
    <text evidence="1">Homododecamer.</text>
</comment>
<comment type="similarity">
    <text evidence="1">Belongs to the type-II 3-dehydroquinase family.</text>
</comment>
<dbReference type="EC" id="4.2.1.10" evidence="1"/>
<dbReference type="EMBL" id="CP000825">
    <property type="protein sequence ID" value="ABV50080.1"/>
    <property type="molecule type" value="Genomic_DNA"/>
</dbReference>
<dbReference type="SMR" id="A8G399"/>
<dbReference type="STRING" id="93060.P9215_04641"/>
<dbReference type="KEGG" id="pmh:P9215_04641"/>
<dbReference type="eggNOG" id="COG0757">
    <property type="taxonomic scope" value="Bacteria"/>
</dbReference>
<dbReference type="HOGENOM" id="CLU_090968_1_0_3"/>
<dbReference type="UniPathway" id="UPA00053">
    <property type="reaction ID" value="UER00086"/>
</dbReference>
<dbReference type="Proteomes" id="UP000002014">
    <property type="component" value="Chromosome"/>
</dbReference>
<dbReference type="GO" id="GO:0003855">
    <property type="term" value="F:3-dehydroquinate dehydratase activity"/>
    <property type="evidence" value="ECO:0007669"/>
    <property type="project" value="UniProtKB-UniRule"/>
</dbReference>
<dbReference type="GO" id="GO:0008652">
    <property type="term" value="P:amino acid biosynthetic process"/>
    <property type="evidence" value="ECO:0007669"/>
    <property type="project" value="UniProtKB-KW"/>
</dbReference>
<dbReference type="GO" id="GO:0009073">
    <property type="term" value="P:aromatic amino acid family biosynthetic process"/>
    <property type="evidence" value="ECO:0007669"/>
    <property type="project" value="UniProtKB-KW"/>
</dbReference>
<dbReference type="GO" id="GO:0009423">
    <property type="term" value="P:chorismate biosynthetic process"/>
    <property type="evidence" value="ECO:0007669"/>
    <property type="project" value="UniProtKB-UniRule"/>
</dbReference>
<dbReference type="GO" id="GO:0019631">
    <property type="term" value="P:quinate catabolic process"/>
    <property type="evidence" value="ECO:0007669"/>
    <property type="project" value="TreeGrafter"/>
</dbReference>
<dbReference type="CDD" id="cd00466">
    <property type="entry name" value="DHQase_II"/>
    <property type="match status" value="1"/>
</dbReference>
<dbReference type="Gene3D" id="3.40.50.9100">
    <property type="entry name" value="Dehydroquinase, class II"/>
    <property type="match status" value="1"/>
</dbReference>
<dbReference type="HAMAP" id="MF_00169">
    <property type="entry name" value="AroQ"/>
    <property type="match status" value="1"/>
</dbReference>
<dbReference type="InterPro" id="IPR001874">
    <property type="entry name" value="DHquinase_II"/>
</dbReference>
<dbReference type="InterPro" id="IPR018509">
    <property type="entry name" value="DHquinase_II_CS"/>
</dbReference>
<dbReference type="InterPro" id="IPR036441">
    <property type="entry name" value="DHquinase_II_sf"/>
</dbReference>
<dbReference type="NCBIfam" id="TIGR01088">
    <property type="entry name" value="aroQ"/>
    <property type="match status" value="1"/>
</dbReference>
<dbReference type="NCBIfam" id="NF003804">
    <property type="entry name" value="PRK05395.1-1"/>
    <property type="match status" value="1"/>
</dbReference>
<dbReference type="NCBIfam" id="NF003805">
    <property type="entry name" value="PRK05395.1-2"/>
    <property type="match status" value="1"/>
</dbReference>
<dbReference type="NCBIfam" id="NF003806">
    <property type="entry name" value="PRK05395.1-3"/>
    <property type="match status" value="1"/>
</dbReference>
<dbReference type="NCBIfam" id="NF003807">
    <property type="entry name" value="PRK05395.1-4"/>
    <property type="match status" value="1"/>
</dbReference>
<dbReference type="PANTHER" id="PTHR21272">
    <property type="entry name" value="CATABOLIC 3-DEHYDROQUINASE"/>
    <property type="match status" value="1"/>
</dbReference>
<dbReference type="PANTHER" id="PTHR21272:SF3">
    <property type="entry name" value="CATABOLIC 3-DEHYDROQUINASE"/>
    <property type="match status" value="1"/>
</dbReference>
<dbReference type="Pfam" id="PF01220">
    <property type="entry name" value="DHquinase_II"/>
    <property type="match status" value="1"/>
</dbReference>
<dbReference type="PIRSF" id="PIRSF001399">
    <property type="entry name" value="DHquinase_II"/>
    <property type="match status" value="1"/>
</dbReference>
<dbReference type="SUPFAM" id="SSF52304">
    <property type="entry name" value="Type II 3-dehydroquinate dehydratase"/>
    <property type="match status" value="1"/>
</dbReference>
<dbReference type="PROSITE" id="PS01029">
    <property type="entry name" value="DEHYDROQUINASE_II"/>
    <property type="match status" value="1"/>
</dbReference>
<proteinExistence type="inferred from homology"/>
<keyword id="KW-0028">Amino-acid biosynthesis</keyword>
<keyword id="KW-0057">Aromatic amino acid biosynthesis</keyword>
<keyword id="KW-0456">Lyase</keyword>